<comment type="function">
    <text evidence="1 2">May act as a bridging protein that binds pectin and other cell wall polysaccharides. Probably involved in maintaining esterification of pectins (By similarity). May be involved in the specific O-acetylation of cell wall polymers (By similarity).</text>
</comment>
<comment type="subcellular location">
    <subcellularLocation>
        <location evidence="5">Membrane</location>
        <topology evidence="5">Single-pass type II membrane protein</topology>
    </subcellularLocation>
</comment>
<comment type="miscellaneous">
    <text evidence="6">Contains 2 motifs that are conserved in esterases, but it is unlikely that this protein belongs to the catalytically active pectin esterases.</text>
</comment>
<comment type="similarity">
    <text evidence="5">Belongs to the PC-esterase family. TBL subfamily.</text>
</comment>
<comment type="sequence caution" evidence="5">
    <conflict type="erroneous gene model prediction">
        <sequence resource="EMBL-CDS" id="AAF32451"/>
    </conflict>
</comment>
<dbReference type="EMBL" id="AC021640">
    <property type="protein sequence ID" value="AAF32451.1"/>
    <property type="status" value="ALT_SEQ"/>
    <property type="molecule type" value="Genomic_DNA"/>
</dbReference>
<dbReference type="EMBL" id="CP002686">
    <property type="protein sequence ID" value="AEE73808.2"/>
    <property type="molecule type" value="Genomic_DNA"/>
</dbReference>
<dbReference type="EMBL" id="BX822813">
    <property type="status" value="NOT_ANNOTATED_CDS"/>
    <property type="molecule type" value="mRNA"/>
</dbReference>
<dbReference type="RefSeq" id="NP_001319451.1">
    <property type="nucleotide sequence ID" value="NM_001337407.1"/>
</dbReference>
<dbReference type="SMR" id="Q9M896"/>
<dbReference type="STRING" id="3702.Q9M896"/>
<dbReference type="GlyGen" id="Q9M896">
    <property type="glycosylation" value="1 site"/>
</dbReference>
<dbReference type="iPTMnet" id="Q9M896"/>
<dbReference type="PaxDb" id="3702-AT3G02440.1"/>
<dbReference type="ProteomicsDB" id="234141"/>
<dbReference type="EnsemblPlants" id="AT3G02440.1">
    <property type="protein sequence ID" value="AT3G02440.1"/>
    <property type="gene ID" value="AT3G02440"/>
</dbReference>
<dbReference type="GeneID" id="821154"/>
<dbReference type="Gramene" id="AT3G02440.1">
    <property type="protein sequence ID" value="AT3G02440.1"/>
    <property type="gene ID" value="AT3G02440"/>
</dbReference>
<dbReference type="KEGG" id="ath:AT3G02440"/>
<dbReference type="Araport" id="AT3G02440"/>
<dbReference type="TAIR" id="AT3G02440">
    <property type="gene designation" value="TBL20"/>
</dbReference>
<dbReference type="eggNOG" id="ENOG502QR7B">
    <property type="taxonomic scope" value="Eukaryota"/>
</dbReference>
<dbReference type="HOGENOM" id="CLU_020953_6_5_1"/>
<dbReference type="InParanoid" id="Q9M896"/>
<dbReference type="OMA" id="GHKPEDK"/>
<dbReference type="PRO" id="PR:Q9M896"/>
<dbReference type="Proteomes" id="UP000006548">
    <property type="component" value="Chromosome 3"/>
</dbReference>
<dbReference type="ExpressionAtlas" id="Q9M896">
    <property type="expression patterns" value="baseline and differential"/>
</dbReference>
<dbReference type="GO" id="GO:0016020">
    <property type="term" value="C:membrane"/>
    <property type="evidence" value="ECO:0007669"/>
    <property type="project" value="UniProtKB-SubCell"/>
</dbReference>
<dbReference type="GO" id="GO:0016413">
    <property type="term" value="F:O-acetyltransferase activity"/>
    <property type="evidence" value="ECO:0007669"/>
    <property type="project" value="InterPro"/>
</dbReference>
<dbReference type="InterPro" id="IPR029962">
    <property type="entry name" value="TBL"/>
</dbReference>
<dbReference type="InterPro" id="IPR026057">
    <property type="entry name" value="TBL_C"/>
</dbReference>
<dbReference type="InterPro" id="IPR025846">
    <property type="entry name" value="TBL_N"/>
</dbReference>
<dbReference type="PANTHER" id="PTHR32285:SF229">
    <property type="entry name" value="PROTEIN TRICHOME BIREFRINGENCE-LIKE 20"/>
    <property type="match status" value="1"/>
</dbReference>
<dbReference type="PANTHER" id="PTHR32285">
    <property type="entry name" value="PROTEIN TRICHOME BIREFRINGENCE-LIKE 9-RELATED"/>
    <property type="match status" value="1"/>
</dbReference>
<dbReference type="Pfam" id="PF13839">
    <property type="entry name" value="PC-Esterase"/>
    <property type="match status" value="1"/>
</dbReference>
<dbReference type="Pfam" id="PF14416">
    <property type="entry name" value="PMR5N"/>
    <property type="match status" value="1"/>
</dbReference>
<accession>Q9M896</accession>
<name>TBL20_ARATH</name>
<feature type="chain" id="PRO_0000425385" description="Protein trichome birefringence-like 20">
    <location>
        <begin position="1"/>
        <end position="478"/>
    </location>
</feature>
<feature type="transmembrane region" description="Helical; Signal-anchor for type II membrane protein" evidence="3">
    <location>
        <begin position="10"/>
        <end position="30"/>
    </location>
</feature>
<feature type="region of interest" description="Disordered" evidence="4">
    <location>
        <begin position="50"/>
        <end position="125"/>
    </location>
</feature>
<feature type="short sequence motif" description="GDS motif">
    <location>
        <begin position="200"/>
        <end position="202"/>
    </location>
</feature>
<feature type="short sequence motif" description="DCXHWCLPGXXDXWN motif">
    <location>
        <begin position="447"/>
        <end position="461"/>
    </location>
</feature>
<feature type="compositionally biased region" description="Low complexity" evidence="4">
    <location>
        <begin position="50"/>
        <end position="68"/>
    </location>
</feature>
<feature type="compositionally biased region" description="Polar residues" evidence="4">
    <location>
        <begin position="92"/>
        <end position="110"/>
    </location>
</feature>
<feature type="compositionally biased region" description="Basic residues" evidence="4">
    <location>
        <begin position="112"/>
        <end position="125"/>
    </location>
</feature>
<keyword id="KW-0472">Membrane</keyword>
<keyword id="KW-1185">Reference proteome</keyword>
<keyword id="KW-0735">Signal-anchor</keyword>
<keyword id="KW-0812">Transmembrane</keyword>
<keyword id="KW-1133">Transmembrane helix</keyword>
<proteinExistence type="evidence at transcript level"/>
<organism>
    <name type="scientific">Arabidopsis thaliana</name>
    <name type="common">Mouse-ear cress</name>
    <dbReference type="NCBI Taxonomy" id="3702"/>
    <lineage>
        <taxon>Eukaryota</taxon>
        <taxon>Viridiplantae</taxon>
        <taxon>Streptophyta</taxon>
        <taxon>Embryophyta</taxon>
        <taxon>Tracheophyta</taxon>
        <taxon>Spermatophyta</taxon>
        <taxon>Magnoliopsida</taxon>
        <taxon>eudicotyledons</taxon>
        <taxon>Gunneridae</taxon>
        <taxon>Pentapetalae</taxon>
        <taxon>rosids</taxon>
        <taxon>malvids</taxon>
        <taxon>Brassicales</taxon>
        <taxon>Brassicaceae</taxon>
        <taxon>Camelineae</taxon>
        <taxon>Arabidopsis</taxon>
    </lineage>
</organism>
<protein>
    <recommendedName>
        <fullName>Protein trichome birefringence-like 20</fullName>
    </recommendedName>
</protein>
<reference key="1">
    <citation type="journal article" date="2000" name="Nature">
        <title>Sequence and analysis of chromosome 3 of the plant Arabidopsis thaliana.</title>
        <authorList>
            <person name="Salanoubat M."/>
            <person name="Lemcke K."/>
            <person name="Rieger M."/>
            <person name="Ansorge W."/>
            <person name="Unseld M."/>
            <person name="Fartmann B."/>
            <person name="Valle G."/>
            <person name="Bloecker H."/>
            <person name="Perez-Alonso M."/>
            <person name="Obermaier B."/>
            <person name="Delseny M."/>
            <person name="Boutry M."/>
            <person name="Grivell L.A."/>
            <person name="Mache R."/>
            <person name="Puigdomenech P."/>
            <person name="De Simone V."/>
            <person name="Choisne N."/>
            <person name="Artiguenave F."/>
            <person name="Robert C."/>
            <person name="Brottier P."/>
            <person name="Wincker P."/>
            <person name="Cattolico L."/>
            <person name="Weissenbach J."/>
            <person name="Saurin W."/>
            <person name="Quetier F."/>
            <person name="Schaefer M."/>
            <person name="Mueller-Auer S."/>
            <person name="Gabel C."/>
            <person name="Fuchs M."/>
            <person name="Benes V."/>
            <person name="Wurmbach E."/>
            <person name="Drzonek H."/>
            <person name="Erfle H."/>
            <person name="Jordan N."/>
            <person name="Bangert S."/>
            <person name="Wiedelmann R."/>
            <person name="Kranz H."/>
            <person name="Voss H."/>
            <person name="Holland R."/>
            <person name="Brandt P."/>
            <person name="Nyakatura G."/>
            <person name="Vezzi A."/>
            <person name="D'Angelo M."/>
            <person name="Pallavicini A."/>
            <person name="Toppo S."/>
            <person name="Simionati B."/>
            <person name="Conrad A."/>
            <person name="Hornischer K."/>
            <person name="Kauer G."/>
            <person name="Loehnert T.-H."/>
            <person name="Nordsiek G."/>
            <person name="Reichelt J."/>
            <person name="Scharfe M."/>
            <person name="Schoen O."/>
            <person name="Bargues M."/>
            <person name="Terol J."/>
            <person name="Climent J."/>
            <person name="Navarro P."/>
            <person name="Collado C."/>
            <person name="Perez-Perez A."/>
            <person name="Ottenwaelder B."/>
            <person name="Duchemin D."/>
            <person name="Cooke R."/>
            <person name="Laudie M."/>
            <person name="Berger-Llauro C."/>
            <person name="Purnelle B."/>
            <person name="Masuy D."/>
            <person name="de Haan M."/>
            <person name="Maarse A.C."/>
            <person name="Alcaraz J.-P."/>
            <person name="Cottet A."/>
            <person name="Casacuberta E."/>
            <person name="Monfort A."/>
            <person name="Argiriou A."/>
            <person name="Flores M."/>
            <person name="Liguori R."/>
            <person name="Vitale D."/>
            <person name="Mannhaupt G."/>
            <person name="Haase D."/>
            <person name="Schoof H."/>
            <person name="Rudd S."/>
            <person name="Zaccaria P."/>
            <person name="Mewes H.-W."/>
            <person name="Mayer K.F.X."/>
            <person name="Kaul S."/>
            <person name="Town C.D."/>
            <person name="Koo H.L."/>
            <person name="Tallon L.J."/>
            <person name="Jenkins J."/>
            <person name="Rooney T."/>
            <person name="Rizzo M."/>
            <person name="Walts A."/>
            <person name="Utterback T."/>
            <person name="Fujii C.Y."/>
            <person name="Shea T.P."/>
            <person name="Creasy T.H."/>
            <person name="Haas B."/>
            <person name="Maiti R."/>
            <person name="Wu D."/>
            <person name="Peterson J."/>
            <person name="Van Aken S."/>
            <person name="Pai G."/>
            <person name="Militscher J."/>
            <person name="Sellers P."/>
            <person name="Gill J.E."/>
            <person name="Feldblyum T.V."/>
            <person name="Preuss D."/>
            <person name="Lin X."/>
            <person name="Nierman W.C."/>
            <person name="Salzberg S.L."/>
            <person name="White O."/>
            <person name="Venter J.C."/>
            <person name="Fraser C.M."/>
            <person name="Kaneko T."/>
            <person name="Nakamura Y."/>
            <person name="Sato S."/>
            <person name="Kato T."/>
            <person name="Asamizu E."/>
            <person name="Sasamoto S."/>
            <person name="Kimura T."/>
            <person name="Idesawa K."/>
            <person name="Kawashima K."/>
            <person name="Kishida Y."/>
            <person name="Kiyokawa C."/>
            <person name="Kohara M."/>
            <person name="Matsumoto M."/>
            <person name="Matsuno A."/>
            <person name="Muraki A."/>
            <person name="Nakayama S."/>
            <person name="Nakazaki N."/>
            <person name="Shinpo S."/>
            <person name="Takeuchi C."/>
            <person name="Wada T."/>
            <person name="Watanabe A."/>
            <person name="Yamada M."/>
            <person name="Yasuda M."/>
            <person name="Tabata S."/>
        </authorList>
    </citation>
    <scope>NUCLEOTIDE SEQUENCE [LARGE SCALE GENOMIC DNA]</scope>
    <source>
        <strain>cv. Columbia</strain>
    </source>
</reference>
<reference key="2">
    <citation type="journal article" date="2017" name="Plant J.">
        <title>Araport11: a complete reannotation of the Arabidopsis thaliana reference genome.</title>
        <authorList>
            <person name="Cheng C.Y."/>
            <person name="Krishnakumar V."/>
            <person name="Chan A.P."/>
            <person name="Thibaud-Nissen F."/>
            <person name="Schobel S."/>
            <person name="Town C.D."/>
        </authorList>
    </citation>
    <scope>GENOME REANNOTATION</scope>
    <source>
        <strain>cv. Columbia</strain>
    </source>
</reference>
<reference key="3">
    <citation type="journal article" date="2004" name="Genome Res.">
        <title>Whole genome sequence comparisons and 'full-length' cDNA sequences: a combined approach to evaluate and improve Arabidopsis genome annotation.</title>
        <authorList>
            <person name="Castelli V."/>
            <person name="Aury J.-M."/>
            <person name="Jaillon O."/>
            <person name="Wincker P."/>
            <person name="Clepet C."/>
            <person name="Menard M."/>
            <person name="Cruaud C."/>
            <person name="Quetier F."/>
            <person name="Scarpelli C."/>
            <person name="Schaechter V."/>
            <person name="Temple G."/>
            <person name="Caboche M."/>
            <person name="Weissenbach J."/>
            <person name="Salanoubat M."/>
        </authorList>
    </citation>
    <scope>NUCLEOTIDE SEQUENCE [LARGE SCALE MRNA] OF 25-478</scope>
    <source>
        <strain>cv. Columbia</strain>
    </source>
</reference>
<reference key="4">
    <citation type="journal article" date="2007" name="Plant J.">
        <title>Arabidopsis ESK1 encodes a novel regulator of freezing tolerance.</title>
        <authorList>
            <person name="Xin Z."/>
            <person name="Mandaokar A."/>
            <person name="Chen J."/>
            <person name="Last R.L."/>
            <person name="Browse J."/>
        </authorList>
    </citation>
    <scope>GENE FAMILY</scope>
    <source>
        <strain>cv. Columbia</strain>
    </source>
</reference>
<reference key="5">
    <citation type="journal article" date="2010" name="Plant Physiol.">
        <title>TRICHOME BIREFRINGENCE and its homolog AT5G01360 encode plant-specific DUF231 proteins required for cellulose biosynthesis in Arabidopsis.</title>
        <authorList>
            <person name="Bischoff V."/>
            <person name="Nita S."/>
            <person name="Neumetzler L."/>
            <person name="Schindelasch D."/>
            <person name="Urbain A."/>
            <person name="Eshed R."/>
            <person name="Persson S."/>
            <person name="Delmer D."/>
            <person name="Scheible W.R."/>
        </authorList>
    </citation>
    <scope>GENE FAMILY</scope>
    <scope>NOMENCLATURE</scope>
</reference>
<reference key="6">
    <citation type="journal article" date="2010" name="Plant Signal. Behav.">
        <title>Involvement of TBL/DUF231 proteins into cell wall biology.</title>
        <authorList>
            <person name="Bischoff V."/>
            <person name="Selbig J."/>
            <person name="Scheible W.R."/>
        </authorList>
    </citation>
    <scope>3D-STRUCTURE MODELING</scope>
</reference>
<gene>
    <name type="primary">TBL20</name>
    <name type="ordered locus">At3g02440</name>
    <name type="ORF">F16B3.7</name>
</gene>
<evidence type="ECO:0000250" key="1">
    <source>
        <dbReference type="UniProtKB" id="Q9FG35"/>
    </source>
</evidence>
<evidence type="ECO:0000250" key="2">
    <source>
        <dbReference type="UniProtKB" id="Q9LY46"/>
    </source>
</evidence>
<evidence type="ECO:0000255" key="3"/>
<evidence type="ECO:0000256" key="4">
    <source>
        <dbReference type="SAM" id="MobiDB-lite"/>
    </source>
</evidence>
<evidence type="ECO:0000305" key="5"/>
<evidence type="ECO:0000305" key="6">
    <source>
    </source>
</evidence>
<sequence length="478" mass="55845">MELPATKLRIGLVIFPLILLTIAPILYLFFGYPLYYSTSTYKHLSNSSSSSAISSPSRYNHSSSSSDSYKTEDSEPSSYDNDYDDTYHDPKSSSLHNNDRLSISSSNGHHQVTPKKEHRRKKRKRKCDIFSGEWIPNPKAPYYTNTTCRAIHEHQNCIKYGRPDLGFMKWRWKPKECDLPLFDPYEFLEIVRGTRMAFVGDSVSRNHVQSLICLLSRVEHPEGDSQQEFNFQRWKYKTYNFTIATFWTTHLVRAEETETGPTGPNSFYNLYLDEPDPTWASQIGEFDYIIISSGQWFFRPLFLFDKQKRIGCLYCYIPGVRNVGAHFAYRRALRTTFKTILGLENFKGEVFLRTFAPSHFEGGEWDKGGNCLKTRPYRSNETELDGMNLETHSIQLDEFRIANRDKNRNDGLNLRLLDVTQMMLLRPDGHPSRFGHKREDKVILYNDCVHWCLPGPIDSWNDFLLDMLKNRDLKRLKY</sequence>